<organism>
    <name type="scientific">Staphylococcus aureus (strain JH9)</name>
    <dbReference type="NCBI Taxonomy" id="359786"/>
    <lineage>
        <taxon>Bacteria</taxon>
        <taxon>Bacillati</taxon>
        <taxon>Bacillota</taxon>
        <taxon>Bacilli</taxon>
        <taxon>Bacillales</taxon>
        <taxon>Staphylococcaceae</taxon>
        <taxon>Staphylococcus</taxon>
    </lineage>
</organism>
<proteinExistence type="inferred from homology"/>
<accession>A5ISX6</accession>
<evidence type="ECO:0000255" key="1">
    <source>
        <dbReference type="HAMAP-Rule" id="MF_02011"/>
    </source>
</evidence>
<evidence type="ECO:0000256" key="2">
    <source>
        <dbReference type="SAM" id="MobiDB-lite"/>
    </source>
</evidence>
<reference key="1">
    <citation type="submission" date="2007-05" db="EMBL/GenBank/DDBJ databases">
        <title>Complete sequence of chromosome of Staphylococcus aureus subsp. aureus JH9.</title>
        <authorList>
            <consortium name="US DOE Joint Genome Institute"/>
            <person name="Copeland A."/>
            <person name="Lucas S."/>
            <person name="Lapidus A."/>
            <person name="Barry K."/>
            <person name="Detter J.C."/>
            <person name="Glavina del Rio T."/>
            <person name="Hammon N."/>
            <person name="Israni S."/>
            <person name="Pitluck S."/>
            <person name="Chain P."/>
            <person name="Malfatti S."/>
            <person name="Shin M."/>
            <person name="Vergez L."/>
            <person name="Schmutz J."/>
            <person name="Larimer F."/>
            <person name="Land M."/>
            <person name="Hauser L."/>
            <person name="Kyrpides N."/>
            <person name="Kim E."/>
            <person name="Tomasz A."/>
            <person name="Richardson P."/>
        </authorList>
    </citation>
    <scope>NUCLEOTIDE SEQUENCE [LARGE SCALE GENOMIC DNA]</scope>
    <source>
        <strain>JH9</strain>
    </source>
</reference>
<feature type="chain" id="PRO_0000337934" description="Cell cycle protein GpsB">
    <location>
        <begin position="1"/>
        <end position="114"/>
    </location>
</feature>
<feature type="region of interest" description="Disordered" evidence="2">
    <location>
        <begin position="74"/>
        <end position="99"/>
    </location>
</feature>
<feature type="coiled-coil region" evidence="1">
    <location>
        <begin position="42"/>
        <end position="77"/>
    </location>
</feature>
<feature type="compositionally biased region" description="Low complexity" evidence="2">
    <location>
        <begin position="85"/>
        <end position="97"/>
    </location>
</feature>
<protein>
    <recommendedName>
        <fullName evidence="1">Cell cycle protein GpsB</fullName>
    </recommendedName>
    <alternativeName>
        <fullName evidence="1">Guiding PBP1-shuttling protein</fullName>
    </alternativeName>
</protein>
<gene>
    <name evidence="1" type="primary">gpsB</name>
    <name type="ordered locus">SaurJH9_1505</name>
</gene>
<keyword id="KW-0131">Cell cycle</keyword>
<keyword id="KW-0132">Cell division</keyword>
<keyword id="KW-0133">Cell shape</keyword>
<keyword id="KW-0175">Coiled coil</keyword>
<keyword id="KW-0963">Cytoplasm</keyword>
<dbReference type="EMBL" id="CP000703">
    <property type="protein sequence ID" value="ABQ49299.1"/>
    <property type="molecule type" value="Genomic_DNA"/>
</dbReference>
<dbReference type="RefSeq" id="WP_001286320.1">
    <property type="nucleotide sequence ID" value="NC_009487.1"/>
</dbReference>
<dbReference type="SMR" id="A5ISX6"/>
<dbReference type="GeneID" id="98345812"/>
<dbReference type="KEGG" id="saj:SaurJH9_1505"/>
<dbReference type="HOGENOM" id="CLU_140309_1_0_9"/>
<dbReference type="GO" id="GO:0005737">
    <property type="term" value="C:cytoplasm"/>
    <property type="evidence" value="ECO:0007669"/>
    <property type="project" value="UniProtKB-SubCell"/>
</dbReference>
<dbReference type="GO" id="GO:0051301">
    <property type="term" value="P:cell division"/>
    <property type="evidence" value="ECO:0007669"/>
    <property type="project" value="UniProtKB-UniRule"/>
</dbReference>
<dbReference type="GO" id="GO:0008360">
    <property type="term" value="P:regulation of cell shape"/>
    <property type="evidence" value="ECO:0007669"/>
    <property type="project" value="UniProtKB-UniRule"/>
</dbReference>
<dbReference type="Gene3D" id="6.10.250.660">
    <property type="match status" value="1"/>
</dbReference>
<dbReference type="HAMAP" id="MF_02011">
    <property type="entry name" value="GpsB"/>
    <property type="match status" value="1"/>
</dbReference>
<dbReference type="InterPro" id="IPR011229">
    <property type="entry name" value="Cell_cycle_GpsB"/>
</dbReference>
<dbReference type="InterPro" id="IPR019933">
    <property type="entry name" value="DivIVA_domain"/>
</dbReference>
<dbReference type="InterPro" id="IPR007793">
    <property type="entry name" value="DivIVA_fam"/>
</dbReference>
<dbReference type="NCBIfam" id="TIGR03544">
    <property type="entry name" value="DivI1A_domain"/>
    <property type="match status" value="1"/>
</dbReference>
<dbReference type="NCBIfam" id="NF010725">
    <property type="entry name" value="PRK14127.1"/>
    <property type="match status" value="1"/>
</dbReference>
<dbReference type="PANTHER" id="PTHR35794:SF1">
    <property type="entry name" value="CELL CYCLE PROTEIN GPSB"/>
    <property type="match status" value="1"/>
</dbReference>
<dbReference type="PANTHER" id="PTHR35794">
    <property type="entry name" value="CELL DIVISION PROTEIN DIVIVA"/>
    <property type="match status" value="1"/>
</dbReference>
<dbReference type="Pfam" id="PF05103">
    <property type="entry name" value="DivIVA"/>
    <property type="match status" value="1"/>
</dbReference>
<dbReference type="PIRSF" id="PIRSF029938">
    <property type="entry name" value="UCP029938"/>
    <property type="match status" value="1"/>
</dbReference>
<name>GPSB_STAA9</name>
<comment type="function">
    <text evidence="1">Divisome component that associates with the complex late in its assembly, after the Z-ring is formed, and is dependent on DivIC and PBP2B for its recruitment to the divisome. Together with EzrA, is a key component of the system that regulates PBP1 localization during cell cycle progression. Its main role could be the removal of PBP1 from the cell pole after pole maturation is completed. Also contributes to the recruitment of PBP1 to the division complex. Not essential for septum formation.</text>
</comment>
<comment type="subunit">
    <text evidence="1">Forms polymers through the coiled coil domains. Interacts with PBP1, MreC and EzrA.</text>
</comment>
<comment type="subcellular location">
    <subcellularLocation>
        <location evidence="1">Cytoplasm</location>
    </subcellularLocation>
    <text evidence="1">Shuttles between the lateral wall and the division site in a cell cycle-dependent manner.</text>
</comment>
<comment type="similarity">
    <text evidence="1">Belongs to the GpsB family.</text>
</comment>
<sequence>MSDVSLKLSAKDIYEKDFEKTMARGYRREEVDAFLDDIIADYQKMADMNNEVVKLSEENHKLKKELEELRLRVATSRPQDNKSFSSNNTTTNTSSNNVDILKRISNLEKAVFGK</sequence>